<accession>B1JUS4</accession>
<organism>
    <name type="scientific">Burkholderia orbicola (strain MC0-3)</name>
    <dbReference type="NCBI Taxonomy" id="406425"/>
    <lineage>
        <taxon>Bacteria</taxon>
        <taxon>Pseudomonadati</taxon>
        <taxon>Pseudomonadota</taxon>
        <taxon>Betaproteobacteria</taxon>
        <taxon>Burkholderiales</taxon>
        <taxon>Burkholderiaceae</taxon>
        <taxon>Burkholderia</taxon>
        <taxon>Burkholderia cepacia complex</taxon>
        <taxon>Burkholderia orbicola</taxon>
    </lineage>
</organism>
<protein>
    <recommendedName>
        <fullName evidence="1">Peptide chain release factor 1</fullName>
        <shortName evidence="1">RF-1</shortName>
    </recommendedName>
</protein>
<keyword id="KW-0963">Cytoplasm</keyword>
<keyword id="KW-0488">Methylation</keyword>
<keyword id="KW-0648">Protein biosynthesis</keyword>
<proteinExistence type="inferred from homology"/>
<name>RF1_BURO0</name>
<gene>
    <name evidence="1" type="primary">prfA</name>
    <name type="ordered locus">Bcenmc03_0482</name>
</gene>
<reference key="1">
    <citation type="submission" date="2008-02" db="EMBL/GenBank/DDBJ databases">
        <title>Complete sequence of chromosome 1 of Burkholderia cenocepacia MC0-3.</title>
        <authorList>
            <person name="Copeland A."/>
            <person name="Lucas S."/>
            <person name="Lapidus A."/>
            <person name="Barry K."/>
            <person name="Bruce D."/>
            <person name="Goodwin L."/>
            <person name="Glavina del Rio T."/>
            <person name="Dalin E."/>
            <person name="Tice H."/>
            <person name="Pitluck S."/>
            <person name="Chain P."/>
            <person name="Malfatti S."/>
            <person name="Shin M."/>
            <person name="Vergez L."/>
            <person name="Schmutz J."/>
            <person name="Larimer F."/>
            <person name="Land M."/>
            <person name="Hauser L."/>
            <person name="Kyrpides N."/>
            <person name="Mikhailova N."/>
            <person name="Tiedje J."/>
            <person name="Richardson P."/>
        </authorList>
    </citation>
    <scope>NUCLEOTIDE SEQUENCE [LARGE SCALE GENOMIC DNA]</scope>
    <source>
        <strain>MC0-3</strain>
    </source>
</reference>
<dbReference type="EMBL" id="CP000958">
    <property type="protein sequence ID" value="ACA89660.1"/>
    <property type="molecule type" value="Genomic_DNA"/>
</dbReference>
<dbReference type="RefSeq" id="WP_006477064.1">
    <property type="nucleotide sequence ID" value="NC_010508.1"/>
</dbReference>
<dbReference type="SMR" id="B1JUS4"/>
<dbReference type="GeneID" id="83047278"/>
<dbReference type="KEGG" id="bcm:Bcenmc03_0482"/>
<dbReference type="HOGENOM" id="CLU_036856_0_1_4"/>
<dbReference type="Proteomes" id="UP000002169">
    <property type="component" value="Chromosome 1"/>
</dbReference>
<dbReference type="GO" id="GO:0005737">
    <property type="term" value="C:cytoplasm"/>
    <property type="evidence" value="ECO:0007669"/>
    <property type="project" value="UniProtKB-SubCell"/>
</dbReference>
<dbReference type="GO" id="GO:0016149">
    <property type="term" value="F:translation release factor activity, codon specific"/>
    <property type="evidence" value="ECO:0007669"/>
    <property type="project" value="UniProtKB-UniRule"/>
</dbReference>
<dbReference type="FunFam" id="3.30.160.20:FF:000004">
    <property type="entry name" value="Peptide chain release factor 1"/>
    <property type="match status" value="1"/>
</dbReference>
<dbReference type="FunFam" id="3.30.70.1660:FF:000002">
    <property type="entry name" value="Peptide chain release factor 1"/>
    <property type="match status" value="1"/>
</dbReference>
<dbReference type="FunFam" id="3.30.70.1660:FF:000004">
    <property type="entry name" value="Peptide chain release factor 1"/>
    <property type="match status" value="1"/>
</dbReference>
<dbReference type="Gene3D" id="3.30.160.20">
    <property type="match status" value="1"/>
</dbReference>
<dbReference type="Gene3D" id="3.30.70.1660">
    <property type="match status" value="2"/>
</dbReference>
<dbReference type="Gene3D" id="6.10.140.1950">
    <property type="match status" value="1"/>
</dbReference>
<dbReference type="HAMAP" id="MF_00093">
    <property type="entry name" value="Rel_fac_1"/>
    <property type="match status" value="1"/>
</dbReference>
<dbReference type="InterPro" id="IPR005139">
    <property type="entry name" value="PCRF"/>
</dbReference>
<dbReference type="InterPro" id="IPR000352">
    <property type="entry name" value="Pep_chain_release_fac_I"/>
</dbReference>
<dbReference type="InterPro" id="IPR045853">
    <property type="entry name" value="Pep_chain_release_fac_I_sf"/>
</dbReference>
<dbReference type="InterPro" id="IPR050057">
    <property type="entry name" value="Prokaryotic/Mito_RF"/>
</dbReference>
<dbReference type="InterPro" id="IPR004373">
    <property type="entry name" value="RF-1"/>
</dbReference>
<dbReference type="NCBIfam" id="TIGR00019">
    <property type="entry name" value="prfA"/>
    <property type="match status" value="1"/>
</dbReference>
<dbReference type="NCBIfam" id="NF001859">
    <property type="entry name" value="PRK00591.1"/>
    <property type="match status" value="1"/>
</dbReference>
<dbReference type="PANTHER" id="PTHR43804">
    <property type="entry name" value="LD18447P"/>
    <property type="match status" value="1"/>
</dbReference>
<dbReference type="PANTHER" id="PTHR43804:SF7">
    <property type="entry name" value="LD18447P"/>
    <property type="match status" value="1"/>
</dbReference>
<dbReference type="Pfam" id="PF03462">
    <property type="entry name" value="PCRF"/>
    <property type="match status" value="1"/>
</dbReference>
<dbReference type="Pfam" id="PF00472">
    <property type="entry name" value="RF-1"/>
    <property type="match status" value="1"/>
</dbReference>
<dbReference type="SMART" id="SM00937">
    <property type="entry name" value="PCRF"/>
    <property type="match status" value="1"/>
</dbReference>
<dbReference type="SUPFAM" id="SSF75620">
    <property type="entry name" value="Release factor"/>
    <property type="match status" value="1"/>
</dbReference>
<dbReference type="PROSITE" id="PS00745">
    <property type="entry name" value="RF_PROK_I"/>
    <property type="match status" value="1"/>
</dbReference>
<comment type="function">
    <text evidence="1">Peptide chain release factor 1 directs the termination of translation in response to the peptide chain termination codons UAG and UAA.</text>
</comment>
<comment type="subcellular location">
    <subcellularLocation>
        <location evidence="1">Cytoplasm</location>
    </subcellularLocation>
</comment>
<comment type="PTM">
    <text evidence="1">Methylated by PrmC. Methylation increases the termination efficiency of RF1.</text>
</comment>
<comment type="similarity">
    <text evidence="1">Belongs to the prokaryotic/mitochondrial release factor family.</text>
</comment>
<sequence length="360" mass="40530">MKTSMQRKLDQLSTRLAELNDLLSRENVTADLDQYRKLTREHAELGPVVEQYALWRQSRSDETAAQELLADPSMRDFAEDEIRSAREGMARLETELQKMLLPKDPNDDRNIFLEIRAGTGGDESALFAGDLLRMYLRFAERQRWQVEMMSESASDLGGYKEVIVRIAGQGAYSRLKFESGGHRVQRVPATETQGRIHTSACTVAVMPEADEIGEVEINPADLRIDTFRASGAGGQHINKTDSAVRVTHIPTGIVVECQDDRSQHKNKDRALKVLAARIKDKQYHEQHAKEAATRKSLIGSGDRSERIRTYNFPQGRMTDHRINLTLYRLEAIMDGDLDELIGALVTEHQAELLASLGEAD</sequence>
<feature type="chain" id="PRO_1000093430" description="Peptide chain release factor 1">
    <location>
        <begin position="1"/>
        <end position="360"/>
    </location>
</feature>
<feature type="modified residue" description="N5-methylglutamine" evidence="1">
    <location>
        <position position="235"/>
    </location>
</feature>
<evidence type="ECO:0000255" key="1">
    <source>
        <dbReference type="HAMAP-Rule" id="MF_00093"/>
    </source>
</evidence>